<protein>
    <recommendedName>
        <fullName evidence="5">Helix-loop-helix protein hlh-12</fullName>
    </recommendedName>
</protein>
<feature type="chain" id="PRO_0000453282" description="Helix-loop-helix protein hlh-12">
    <location>
        <begin position="1"/>
        <end position="150"/>
    </location>
</feature>
<feature type="domain" description="bHLH" evidence="1">
    <location>
        <begin position="13"/>
        <end position="65"/>
    </location>
</feature>
<feature type="region of interest" description="Disordered" evidence="2">
    <location>
        <begin position="1"/>
        <end position="24"/>
    </location>
</feature>
<feature type="region of interest" description="Basic motif" evidence="1">
    <location>
        <begin position="13"/>
        <end position="26"/>
    </location>
</feature>
<feature type="region of interest" description="Helix-loop-helix motif" evidence="1">
    <location>
        <begin position="27"/>
        <end position="65"/>
    </location>
</feature>
<feature type="compositionally biased region" description="Basic and acidic residues" evidence="2">
    <location>
        <begin position="11"/>
        <end position="24"/>
    </location>
</feature>
<gene>
    <name evidence="7" type="primary">hlh-12</name>
    <name evidence="7" type="synonym">mig-24</name>
    <name evidence="7" type="ORF">C28C12.8</name>
</gene>
<evidence type="ECO:0000255" key="1">
    <source>
        <dbReference type="PROSITE-ProRule" id="PRU00981"/>
    </source>
</evidence>
<evidence type="ECO:0000256" key="2">
    <source>
        <dbReference type="SAM" id="MobiDB-lite"/>
    </source>
</evidence>
<evidence type="ECO:0000269" key="3">
    <source>
    </source>
</evidence>
<evidence type="ECO:0000269" key="4">
    <source>
    </source>
</evidence>
<evidence type="ECO:0000305" key="5"/>
<evidence type="ECO:0000312" key="6">
    <source>
        <dbReference type="Proteomes" id="UP000001940"/>
    </source>
</evidence>
<evidence type="ECO:0000312" key="7">
    <source>
        <dbReference type="WormBase" id="C28C12.8"/>
    </source>
</evidence>
<accession>Q18277</accession>
<sequence>MAKKPRVTKLNTDRRSRANERERQRVSEMNGMFDVLLNLLPPSHFKTRLSRVQILREATSYIIRLHNFLIESSNSDIDAITVFPHIFNGERKSNKDAIRRPMKLKQGGGVAAFISRHELPPLQLPNPVIPILKPTSVPVWPQTNVYIAYF</sequence>
<keyword id="KW-0238">DNA-binding</keyword>
<keyword id="KW-0539">Nucleus</keyword>
<keyword id="KW-1185">Reference proteome</keyword>
<keyword id="KW-0804">Transcription</keyword>
<keyword id="KW-0805">Transcription regulation</keyword>
<name>HLH12_CAEEL</name>
<organism evidence="6">
    <name type="scientific">Caenorhabditis elegans</name>
    <dbReference type="NCBI Taxonomy" id="6239"/>
    <lineage>
        <taxon>Eukaryota</taxon>
        <taxon>Metazoa</taxon>
        <taxon>Ecdysozoa</taxon>
        <taxon>Nematoda</taxon>
        <taxon>Chromadorea</taxon>
        <taxon>Rhabditida</taxon>
        <taxon>Rhabditina</taxon>
        <taxon>Rhabditomorpha</taxon>
        <taxon>Rhabditoidea</taxon>
        <taxon>Rhabditidae</taxon>
        <taxon>Peloderinae</taxon>
        <taxon>Caenorhabditis</taxon>
    </lineage>
</organism>
<reference evidence="6" key="1">
    <citation type="journal article" date="1998" name="Science">
        <title>Genome sequence of the nematode C. elegans: a platform for investigating biology.</title>
        <authorList>
            <consortium name="The C. elegans sequencing consortium"/>
        </authorList>
    </citation>
    <scope>NUCLEOTIDE SEQUENCE [LARGE SCALE GENOMIC DNA]</scope>
    <source>
        <strain evidence="6">Bristol N2</strain>
    </source>
</reference>
<reference evidence="5" key="2">
    <citation type="journal article" date="2007" name="Dev. Biol.">
        <title>bHLH transcription factors regulate organ morphogenesis via activation of an ADAMTS protease in C. elegans.</title>
        <authorList>
            <person name="Tamai K.K."/>
            <person name="Nishiwaki K."/>
        </authorList>
    </citation>
    <scope>FUNCTION</scope>
    <scope>INTERACTION WITH HLH-2</scope>
    <scope>DEVELOPMENTAL STAGE</scope>
    <scope>DISRUPTION PHENOTYPE</scope>
</reference>
<reference evidence="5" key="3">
    <citation type="journal article" date="2015" name="Gene">
        <title>Transcription factor hlh-2/E/Daughterless drives expression of alpha integrin ina-1 during DTC migration in C. elegans.</title>
        <authorList>
            <person name="Meighan C.M."/>
            <person name="Kann A.P."/>
            <person name="Egress E.R."/>
        </authorList>
    </citation>
    <scope>FUNCTION</scope>
    <scope>DISRUPTION PHENOTYPE</scope>
</reference>
<proteinExistence type="evidence at protein level"/>
<dbReference type="EMBL" id="BX284604">
    <property type="protein sequence ID" value="CCD64010.1"/>
    <property type="molecule type" value="Genomic_DNA"/>
</dbReference>
<dbReference type="PIR" id="T15675">
    <property type="entry name" value="T15675"/>
</dbReference>
<dbReference type="RefSeq" id="NP_501445.1">
    <property type="nucleotide sequence ID" value="NM_069044.5"/>
</dbReference>
<dbReference type="SMR" id="Q18277"/>
<dbReference type="FunCoup" id="Q18277">
    <property type="interactions" value="355"/>
</dbReference>
<dbReference type="IntAct" id="Q18277">
    <property type="interactions" value="1"/>
</dbReference>
<dbReference type="STRING" id="6239.C28C12.8.1"/>
<dbReference type="PaxDb" id="6239-C28C12.8"/>
<dbReference type="EnsemblMetazoa" id="C28C12.8.1">
    <property type="protein sequence ID" value="C28C12.8.1"/>
    <property type="gene ID" value="WBGene00001956"/>
</dbReference>
<dbReference type="GeneID" id="182980"/>
<dbReference type="KEGG" id="cel:CELE_C28C12.8"/>
<dbReference type="UCSC" id="C28C12.8">
    <property type="organism name" value="c. elegans"/>
</dbReference>
<dbReference type="AGR" id="WB:WBGene00001956"/>
<dbReference type="CTD" id="182980"/>
<dbReference type="WormBase" id="C28C12.8">
    <property type="protein sequence ID" value="CE04115"/>
    <property type="gene ID" value="WBGene00001956"/>
    <property type="gene designation" value="hlh-12"/>
</dbReference>
<dbReference type="eggNOG" id="ENOG502TIDB">
    <property type="taxonomic scope" value="Eukaryota"/>
</dbReference>
<dbReference type="GeneTree" id="ENSGT00990000206751"/>
<dbReference type="HOGENOM" id="CLU_1827095_0_0_1"/>
<dbReference type="InParanoid" id="Q18277"/>
<dbReference type="OMA" id="AFISRHE"/>
<dbReference type="OrthoDB" id="5865790at2759"/>
<dbReference type="PRO" id="PR:Q18277"/>
<dbReference type="Proteomes" id="UP000001940">
    <property type="component" value="Chromosome IV"/>
</dbReference>
<dbReference type="Bgee" id="WBGene00001956">
    <property type="expression patterns" value="Expressed in larva and 1 other cell type or tissue"/>
</dbReference>
<dbReference type="GO" id="GO:0005634">
    <property type="term" value="C:nucleus"/>
    <property type="evidence" value="ECO:0000314"/>
    <property type="project" value="WormBase"/>
</dbReference>
<dbReference type="GO" id="GO:0000981">
    <property type="term" value="F:DNA-binding transcription factor activity, RNA polymerase II-specific"/>
    <property type="evidence" value="ECO:0000318"/>
    <property type="project" value="GO_Central"/>
</dbReference>
<dbReference type="GO" id="GO:0046983">
    <property type="term" value="F:protein dimerization activity"/>
    <property type="evidence" value="ECO:0007669"/>
    <property type="project" value="InterPro"/>
</dbReference>
<dbReference type="GO" id="GO:0000977">
    <property type="term" value="F:RNA polymerase II transcription regulatory region sequence-specific DNA binding"/>
    <property type="evidence" value="ECO:0000318"/>
    <property type="project" value="GO_Central"/>
</dbReference>
<dbReference type="GO" id="GO:0032502">
    <property type="term" value="P:developmental process"/>
    <property type="evidence" value="ECO:0000318"/>
    <property type="project" value="GO_Central"/>
</dbReference>
<dbReference type="GO" id="GO:0035262">
    <property type="term" value="P:gonad morphogenesis"/>
    <property type="evidence" value="ECO:0000315"/>
    <property type="project" value="UniProtKB"/>
</dbReference>
<dbReference type="GO" id="GO:1903356">
    <property type="term" value="P:positive regulation of distal tip cell migration"/>
    <property type="evidence" value="ECO:0000315"/>
    <property type="project" value="UniProtKB"/>
</dbReference>
<dbReference type="GO" id="GO:0010628">
    <property type="term" value="P:positive regulation of gene expression"/>
    <property type="evidence" value="ECO:0000315"/>
    <property type="project" value="UniProtKB"/>
</dbReference>
<dbReference type="GO" id="GO:0006357">
    <property type="term" value="P:regulation of transcription by RNA polymerase II"/>
    <property type="evidence" value="ECO:0000318"/>
    <property type="project" value="GO_Central"/>
</dbReference>
<dbReference type="Gene3D" id="4.10.280.10">
    <property type="entry name" value="Helix-loop-helix DNA-binding domain"/>
    <property type="match status" value="1"/>
</dbReference>
<dbReference type="InterPro" id="IPR011598">
    <property type="entry name" value="bHLH_dom"/>
</dbReference>
<dbReference type="InterPro" id="IPR050283">
    <property type="entry name" value="E-box_TF_Regulators"/>
</dbReference>
<dbReference type="InterPro" id="IPR036638">
    <property type="entry name" value="HLH_DNA-bd_sf"/>
</dbReference>
<dbReference type="PANTHER" id="PTHR23349">
    <property type="entry name" value="BASIC HELIX-LOOP-HELIX TRANSCRIPTION FACTOR, TWIST"/>
    <property type="match status" value="1"/>
</dbReference>
<dbReference type="PANTHER" id="PTHR23349:SF63">
    <property type="entry name" value="FER3-LIKE PROTEIN"/>
    <property type="match status" value="1"/>
</dbReference>
<dbReference type="Pfam" id="PF00010">
    <property type="entry name" value="HLH"/>
    <property type="match status" value="1"/>
</dbReference>
<dbReference type="SMART" id="SM00353">
    <property type="entry name" value="HLH"/>
    <property type="match status" value="1"/>
</dbReference>
<dbReference type="SUPFAM" id="SSF47459">
    <property type="entry name" value="HLH, helix-loop-helix DNA-binding domain"/>
    <property type="match status" value="1"/>
</dbReference>
<dbReference type="PROSITE" id="PS50888">
    <property type="entry name" value="BHLH"/>
    <property type="match status" value="1"/>
</dbReference>
<comment type="function">
    <text evidence="3 4">Transcription factor which binds the E box motif 5'-GCAGGTG-3' (PubMed:17588558). Involved in migration of the gonadal leader cells; distal tip cells (DTCs) in hermaphrodites, and linker cells in males (PubMed:17588558, PubMed:25982859). Positively regulates expression of alpha integrin ina-1 and ADAMTS protease gon-1 (PubMed:17588558, PubMed:25982859).</text>
</comment>
<comment type="subunit">
    <text evidence="3">Forms a heterodimer with helix-loop-helix protein hlh-2.</text>
</comment>
<comment type="subcellular location">
    <subcellularLocation>
        <location evidence="1">Nucleus</location>
    </subcellularLocation>
</comment>
<comment type="developmental stage">
    <text evidence="3">First expressed in the gonadal leader cells, the distal tip cells (DTCs) in hermaphrodites and linker cells in males, during the early larval L2 stage (PubMed:17588558). Expression in the linker cells in males continues until larval stage L4 (PubMed:17588558). Expression in DTCs in hermaphrodites continues until adulthood (PubMed:17588558).</text>
</comment>
<comment type="disruption phenotype">
    <text evidence="3 4">RNAi-mediated knockdown reduces expression of alpha integrin ina-1 and ADAMTS protease gon-1, and causes defects in migration of the gonadal distal tip cells (DTCs).</text>
</comment>